<proteinExistence type="inferred from homology"/>
<feature type="chain" id="PRO_1000003538" description="Small ribosomal subunit protein bS18">
    <location>
        <begin position="1"/>
        <end position="87"/>
    </location>
</feature>
<comment type="function">
    <text evidence="1">Binds as a heterodimer with protein bS6 to the central domain of the 16S rRNA, where it helps stabilize the platform of the 30S subunit.</text>
</comment>
<comment type="subunit">
    <text evidence="1">Part of the 30S ribosomal subunit. Forms a tight heterodimer with protein bS6.</text>
</comment>
<comment type="similarity">
    <text evidence="1">Belongs to the bacterial ribosomal protein bS18 family.</text>
</comment>
<reference key="1">
    <citation type="journal article" date="2005" name="J. Bacteriol.">
        <title>Swine and poultry pathogens: the complete genome sequences of two strains of Mycoplasma hyopneumoniae and a strain of Mycoplasma synoviae.</title>
        <authorList>
            <person name="Vasconcelos A.T.R."/>
            <person name="Ferreira H.B."/>
            <person name="Bizarro C.V."/>
            <person name="Bonatto S.L."/>
            <person name="Carvalho M.O."/>
            <person name="Pinto P.M."/>
            <person name="Almeida D.F."/>
            <person name="Almeida L.G.P."/>
            <person name="Almeida R."/>
            <person name="Alves-Junior L."/>
            <person name="Assuncao E.N."/>
            <person name="Azevedo V.A.C."/>
            <person name="Bogo M.R."/>
            <person name="Brigido M.M."/>
            <person name="Brocchi M."/>
            <person name="Burity H.A."/>
            <person name="Camargo A.A."/>
            <person name="Camargo S.S."/>
            <person name="Carepo M.S."/>
            <person name="Carraro D.M."/>
            <person name="de Mattos Cascardo J.C."/>
            <person name="Castro L.A."/>
            <person name="Cavalcanti G."/>
            <person name="Chemale G."/>
            <person name="Collevatti R.G."/>
            <person name="Cunha C.W."/>
            <person name="Dallagiovanna B."/>
            <person name="Dambros B.P."/>
            <person name="Dellagostin O.A."/>
            <person name="Falcao C."/>
            <person name="Fantinatti-Garboggini F."/>
            <person name="Felipe M.S.S."/>
            <person name="Fiorentin L."/>
            <person name="Franco G.R."/>
            <person name="Freitas N.S.A."/>
            <person name="Frias D."/>
            <person name="Grangeiro T.B."/>
            <person name="Grisard E.C."/>
            <person name="Guimaraes C.T."/>
            <person name="Hungria M."/>
            <person name="Jardim S.N."/>
            <person name="Krieger M.A."/>
            <person name="Laurino J.P."/>
            <person name="Lima L.F.A."/>
            <person name="Lopes M.I."/>
            <person name="Loreto E.L.S."/>
            <person name="Madeira H.M.F."/>
            <person name="Manfio G.P."/>
            <person name="Maranhao A.Q."/>
            <person name="Martinkovics C.T."/>
            <person name="Medeiros S.R.B."/>
            <person name="Moreira M.A.M."/>
            <person name="Neiva M."/>
            <person name="Ramalho-Neto C.E."/>
            <person name="Nicolas M.F."/>
            <person name="Oliveira S.C."/>
            <person name="Paixao R.F.C."/>
            <person name="Pedrosa F.O."/>
            <person name="Pena S.D.J."/>
            <person name="Pereira M."/>
            <person name="Pereira-Ferrari L."/>
            <person name="Piffer I."/>
            <person name="Pinto L.S."/>
            <person name="Potrich D.P."/>
            <person name="Salim A.C.M."/>
            <person name="Santos F.R."/>
            <person name="Schmitt R."/>
            <person name="Schneider M.P.C."/>
            <person name="Schrank A."/>
            <person name="Schrank I.S."/>
            <person name="Schuck A.F."/>
            <person name="Seuanez H.N."/>
            <person name="Silva D.W."/>
            <person name="Silva R."/>
            <person name="Silva S.C."/>
            <person name="Soares C.M.A."/>
            <person name="Souza K.R.L."/>
            <person name="Souza R.C."/>
            <person name="Staats C.C."/>
            <person name="Steffens M.B.R."/>
            <person name="Teixeira S.M.R."/>
            <person name="Urmenyi T.P."/>
            <person name="Vainstein M.H."/>
            <person name="Zuccherato L.W."/>
            <person name="Simpson A.J.G."/>
            <person name="Zaha A."/>
        </authorList>
    </citation>
    <scope>NUCLEOTIDE SEQUENCE [LARGE SCALE GENOMIC DNA]</scope>
    <source>
        <strain>7448</strain>
    </source>
</reference>
<accession>Q4A872</accession>
<organism>
    <name type="scientific">Mesomycoplasma hyopneumoniae (strain 7448)</name>
    <name type="common">Mycoplasma hyopneumoniae</name>
    <dbReference type="NCBI Taxonomy" id="262722"/>
    <lineage>
        <taxon>Bacteria</taxon>
        <taxon>Bacillati</taxon>
        <taxon>Mycoplasmatota</taxon>
        <taxon>Mycoplasmoidales</taxon>
        <taxon>Metamycoplasmataceae</taxon>
        <taxon>Mesomycoplasma</taxon>
    </lineage>
</organism>
<name>RS18_MESH7</name>
<keyword id="KW-0687">Ribonucleoprotein</keyword>
<keyword id="KW-0689">Ribosomal protein</keyword>
<keyword id="KW-0694">RNA-binding</keyword>
<keyword id="KW-0699">rRNA-binding</keyword>
<sequence length="87" mass="10285">MNKKYAKKFKKKPCQFCEAKLFYIDYKDIEVLQRFINTFGKIQPSRITGNCAKHQRKLALAVKRARFVALLPFIGDRIRGNYDKTRV</sequence>
<gene>
    <name evidence="1" type="primary">rpsR</name>
    <name type="ordered locus">MHP7448_0294</name>
</gene>
<protein>
    <recommendedName>
        <fullName evidence="1">Small ribosomal subunit protein bS18</fullName>
    </recommendedName>
    <alternativeName>
        <fullName evidence="2">30S ribosomal protein S18</fullName>
    </alternativeName>
</protein>
<evidence type="ECO:0000255" key="1">
    <source>
        <dbReference type="HAMAP-Rule" id="MF_00270"/>
    </source>
</evidence>
<evidence type="ECO:0000305" key="2"/>
<dbReference type="EMBL" id="AE017244">
    <property type="protein sequence ID" value="AAZ53667.2"/>
    <property type="molecule type" value="Genomic_DNA"/>
</dbReference>
<dbReference type="RefSeq" id="WP_011206141.1">
    <property type="nucleotide sequence ID" value="NC_007332.1"/>
</dbReference>
<dbReference type="SMR" id="Q4A872"/>
<dbReference type="GeneID" id="41334595"/>
<dbReference type="KEGG" id="mhp:MHP7448_0294"/>
<dbReference type="HOGENOM" id="CLU_148710_2_0_14"/>
<dbReference type="Proteomes" id="UP000000553">
    <property type="component" value="Chromosome"/>
</dbReference>
<dbReference type="GO" id="GO:0022627">
    <property type="term" value="C:cytosolic small ribosomal subunit"/>
    <property type="evidence" value="ECO:0007669"/>
    <property type="project" value="TreeGrafter"/>
</dbReference>
<dbReference type="GO" id="GO:0070181">
    <property type="term" value="F:small ribosomal subunit rRNA binding"/>
    <property type="evidence" value="ECO:0007669"/>
    <property type="project" value="TreeGrafter"/>
</dbReference>
<dbReference type="GO" id="GO:0003735">
    <property type="term" value="F:structural constituent of ribosome"/>
    <property type="evidence" value="ECO:0007669"/>
    <property type="project" value="InterPro"/>
</dbReference>
<dbReference type="GO" id="GO:0006412">
    <property type="term" value="P:translation"/>
    <property type="evidence" value="ECO:0007669"/>
    <property type="project" value="UniProtKB-UniRule"/>
</dbReference>
<dbReference type="Gene3D" id="4.10.640.10">
    <property type="entry name" value="Ribosomal protein S18"/>
    <property type="match status" value="1"/>
</dbReference>
<dbReference type="HAMAP" id="MF_00270">
    <property type="entry name" value="Ribosomal_bS18"/>
    <property type="match status" value="1"/>
</dbReference>
<dbReference type="InterPro" id="IPR001648">
    <property type="entry name" value="Ribosomal_bS18"/>
</dbReference>
<dbReference type="InterPro" id="IPR036870">
    <property type="entry name" value="Ribosomal_bS18_sf"/>
</dbReference>
<dbReference type="NCBIfam" id="TIGR00165">
    <property type="entry name" value="S18"/>
    <property type="match status" value="1"/>
</dbReference>
<dbReference type="PANTHER" id="PTHR13479">
    <property type="entry name" value="30S RIBOSOMAL PROTEIN S18"/>
    <property type="match status" value="1"/>
</dbReference>
<dbReference type="PANTHER" id="PTHR13479:SF40">
    <property type="entry name" value="SMALL RIBOSOMAL SUBUNIT PROTEIN BS18M"/>
    <property type="match status" value="1"/>
</dbReference>
<dbReference type="Pfam" id="PF01084">
    <property type="entry name" value="Ribosomal_S18"/>
    <property type="match status" value="1"/>
</dbReference>
<dbReference type="PRINTS" id="PR00974">
    <property type="entry name" value="RIBOSOMALS18"/>
</dbReference>
<dbReference type="SUPFAM" id="SSF46911">
    <property type="entry name" value="Ribosomal protein S18"/>
    <property type="match status" value="1"/>
</dbReference>